<keyword id="KW-0998">Cell outer membrane</keyword>
<keyword id="KW-0472">Membrane</keyword>
<keyword id="KW-1185">Reference proteome</keyword>
<keyword id="KW-0677">Repeat</keyword>
<keyword id="KW-0732">Signal</keyword>
<keyword id="KW-0812">Transmembrane</keyword>
<keyword id="KW-1134">Transmembrane beta strand</keyword>
<gene>
    <name evidence="1" type="primary">bamA</name>
    <name type="synonym">omp85</name>
    <name type="ordered locus">NMB0182</name>
</gene>
<evidence type="ECO:0000255" key="1">
    <source>
        <dbReference type="HAMAP-Rule" id="MF_01430"/>
    </source>
</evidence>
<evidence type="ECO:0000255" key="2">
    <source>
        <dbReference type="PROSITE-ProRule" id="PRU01115"/>
    </source>
</evidence>
<feature type="signal peptide" evidence="1">
    <location>
        <begin position="1"/>
        <end position="21"/>
    </location>
</feature>
<feature type="chain" id="PRO_0000349887" description="Outer membrane protein assembly factor BamA">
    <location>
        <begin position="22"/>
        <end position="797"/>
    </location>
</feature>
<feature type="domain" description="POTRA 1" evidence="2">
    <location>
        <begin position="23"/>
        <end position="90"/>
    </location>
</feature>
<feature type="domain" description="POTRA 2" evidence="2">
    <location>
        <begin position="91"/>
        <end position="171"/>
    </location>
</feature>
<feature type="domain" description="POTRA 3" evidence="2">
    <location>
        <begin position="174"/>
        <end position="262"/>
    </location>
</feature>
<feature type="domain" description="POTRA 4" evidence="2">
    <location>
        <begin position="265"/>
        <end position="344"/>
    </location>
</feature>
<feature type="domain" description="POTRA 5" evidence="2">
    <location>
        <begin position="347"/>
        <end position="421"/>
    </location>
</feature>
<comment type="function">
    <text evidence="1">Part of the outer membrane protein assembly complex, which is involved in assembly and insertion of beta-barrel proteins into the outer membrane.</text>
</comment>
<comment type="subunit">
    <text evidence="1">Part of the Bam complex.</text>
</comment>
<comment type="subcellular location">
    <subcellularLocation>
        <location evidence="1">Cell outer membrane</location>
    </subcellularLocation>
</comment>
<comment type="miscellaneous">
    <text>Present in outer membrane vesicle formulations which are used as vaccines in human.</text>
</comment>
<comment type="similarity">
    <text evidence="1">Belongs to the BamA family.</text>
</comment>
<name>BAMA_NEIMB</name>
<organism>
    <name type="scientific">Neisseria meningitidis serogroup B (strain ATCC BAA-335 / MC58)</name>
    <dbReference type="NCBI Taxonomy" id="122586"/>
    <lineage>
        <taxon>Bacteria</taxon>
        <taxon>Pseudomonadati</taxon>
        <taxon>Pseudomonadota</taxon>
        <taxon>Betaproteobacteria</taxon>
        <taxon>Neisseriales</taxon>
        <taxon>Neisseriaceae</taxon>
        <taxon>Neisseria</taxon>
    </lineage>
</organism>
<sequence length="797" mass="88437">MKLKQIASALMMLGISPLALADFTIQDIRVEGLQRTEPSTVFNYLPVKVGDTYNDTHGSAIIKSLYATGFFDDVRVETADGQLLLTVIERPTIGSLNITGAKMLQNDAIKKNLESFGLAQSQYFNQATLNQAVAGLKEEYLGRGKLNIQITPKVTKLARNRVDIDITIDEGKSAKITDIEFEGNQVYSDRKLMRQMSLTEGGIWTWLTRSNQFNEQKFAQDMEKVTDFYQNNGYFDFRILDTDIQTNEDKTKQTIKITVHEGGRFRWGKVSIEGDTNEVPKAELEKLLTMKPGKWYERQQMTAVLGEIQNRMGSAGYAYSEISVQPLPNAETKTVDFVLHIEPGRKIYVNEIHITGNNKTRDEVVRRELRQMESAPYDTSKLQRSKERVELLGYFDNVQFDAVPLAGTPDKVDLNMSLTERSTGSLDLSAGWVQDTGLVMSAGVSQDNLFGTGKSAALRASRSKTTLNGSLSFTDPYFTADGVSLGYDVYGKAFDPRKASTSIKQYKTTTAGAGIRMSVPVTEYDRVNFGLVAEHLTVNTYNKAPKHYADFIKKYGKTDGTDGSFKGWLYKGTVGWGRNKTDSALWPTRGYLTGVNAEIALPGSKLQYYSATHNQTWFFPLSKTFTLMLGGEVGIAGGYGRTKEIPFFENFYGGGLGSVRGYESGTLGPKVYDEYGEKISYGGNKKANVSAELLFPMPGAKDARTVRLSLFADAGSVWDGKTYDDNSSSATGGRVQNIYGAGNTHKSTFTNELRYSAGGAVTWLSPLGPMKFSYAYPLKKKPEDEIQRFQFQLGTTF</sequence>
<proteinExistence type="evidence at protein level"/>
<dbReference type="EMBL" id="AE002098">
    <property type="protein sequence ID" value="AAF40639.1"/>
    <property type="molecule type" value="Genomic_DNA"/>
</dbReference>
<dbReference type="PIR" id="G81228">
    <property type="entry name" value="G81228"/>
</dbReference>
<dbReference type="RefSeq" id="NP_273240.1">
    <property type="nucleotide sequence ID" value="NC_003112.2"/>
</dbReference>
<dbReference type="RefSeq" id="WP_002243947.1">
    <property type="nucleotide sequence ID" value="NC_003112.2"/>
</dbReference>
<dbReference type="SMR" id="Q9K1H0"/>
<dbReference type="FunCoup" id="Q9K1H0">
    <property type="interactions" value="238"/>
</dbReference>
<dbReference type="STRING" id="122586.NMB0182"/>
<dbReference type="TCDB" id="1.B.33.1.1">
    <property type="family name" value="the outer membrane protein insertion porin (bam complex) (ompip) family"/>
</dbReference>
<dbReference type="PaxDb" id="122586-NMB0182"/>
<dbReference type="KEGG" id="nme:NMB0182"/>
<dbReference type="PATRIC" id="fig|122586.8.peg.224"/>
<dbReference type="HOGENOM" id="CLU_007664_1_0_4"/>
<dbReference type="InParanoid" id="Q9K1H0"/>
<dbReference type="OrthoDB" id="9803054at2"/>
<dbReference type="Proteomes" id="UP000000425">
    <property type="component" value="Chromosome"/>
</dbReference>
<dbReference type="GO" id="GO:0009279">
    <property type="term" value="C:cell outer membrane"/>
    <property type="evidence" value="ECO:0007669"/>
    <property type="project" value="UniProtKB-SubCell"/>
</dbReference>
<dbReference type="GO" id="GO:0043165">
    <property type="term" value="P:Gram-negative-bacterium-type cell outer membrane assembly"/>
    <property type="evidence" value="ECO:0007669"/>
    <property type="project" value="UniProtKB-UniRule"/>
</dbReference>
<dbReference type="GO" id="GO:0051205">
    <property type="term" value="P:protein insertion into membrane"/>
    <property type="evidence" value="ECO:0007669"/>
    <property type="project" value="UniProtKB-UniRule"/>
</dbReference>
<dbReference type="Gene3D" id="3.10.20.310">
    <property type="entry name" value="membrane protein fhac"/>
    <property type="match status" value="5"/>
</dbReference>
<dbReference type="Gene3D" id="2.40.160.50">
    <property type="entry name" value="membrane protein fhac: a member of the omp85/tpsb transporter family"/>
    <property type="match status" value="1"/>
</dbReference>
<dbReference type="HAMAP" id="MF_01430">
    <property type="entry name" value="OM_assembly_BamA"/>
    <property type="match status" value="1"/>
</dbReference>
<dbReference type="InterPro" id="IPR000184">
    <property type="entry name" value="Bac_surfAg_D15"/>
</dbReference>
<dbReference type="InterPro" id="IPR010827">
    <property type="entry name" value="BamA/TamA_POTRA"/>
</dbReference>
<dbReference type="InterPro" id="IPR039910">
    <property type="entry name" value="D15-like"/>
</dbReference>
<dbReference type="InterPro" id="IPR023707">
    <property type="entry name" value="OM_assembly_BamA"/>
</dbReference>
<dbReference type="InterPro" id="IPR034746">
    <property type="entry name" value="POTRA"/>
</dbReference>
<dbReference type="NCBIfam" id="TIGR03303">
    <property type="entry name" value="OM_YaeT"/>
    <property type="match status" value="1"/>
</dbReference>
<dbReference type="PANTHER" id="PTHR12815">
    <property type="entry name" value="SORTING AND ASSEMBLY MACHINERY SAMM50 PROTEIN FAMILY MEMBER"/>
    <property type="match status" value="1"/>
</dbReference>
<dbReference type="PANTHER" id="PTHR12815:SF47">
    <property type="entry name" value="TRANSLOCATION AND ASSEMBLY MODULE SUBUNIT TAMA"/>
    <property type="match status" value="1"/>
</dbReference>
<dbReference type="Pfam" id="PF01103">
    <property type="entry name" value="Omp85"/>
    <property type="match status" value="1"/>
</dbReference>
<dbReference type="Pfam" id="PF07244">
    <property type="entry name" value="POTRA"/>
    <property type="match status" value="5"/>
</dbReference>
<dbReference type="PIRSF" id="PIRSF006076">
    <property type="entry name" value="OM_assembly_OMP85"/>
    <property type="match status" value="1"/>
</dbReference>
<dbReference type="PROSITE" id="PS51779">
    <property type="entry name" value="POTRA"/>
    <property type="match status" value="5"/>
</dbReference>
<accession>Q9K1H0</accession>
<protein>
    <recommendedName>
        <fullName evidence="1">Outer membrane protein assembly factor BamA</fullName>
    </recommendedName>
    <alternativeName>
        <fullName>Outer membrane protein Omp85</fullName>
    </alternativeName>
</protein>
<reference key="1">
    <citation type="journal article" date="2000" name="Science">
        <title>Complete genome sequence of Neisseria meningitidis serogroup B strain MC58.</title>
        <authorList>
            <person name="Tettelin H."/>
            <person name="Saunders N.J."/>
            <person name="Heidelberg J.F."/>
            <person name="Jeffries A.C."/>
            <person name="Nelson K.E."/>
            <person name="Eisen J.A."/>
            <person name="Ketchum K.A."/>
            <person name="Hood D.W."/>
            <person name="Peden J.F."/>
            <person name="Dodson R.J."/>
            <person name="Nelson W.C."/>
            <person name="Gwinn M.L."/>
            <person name="DeBoy R.T."/>
            <person name="Peterson J.D."/>
            <person name="Hickey E.K."/>
            <person name="Haft D.H."/>
            <person name="Salzberg S.L."/>
            <person name="White O."/>
            <person name="Fleischmann R.D."/>
            <person name="Dougherty B.A."/>
            <person name="Mason T.M."/>
            <person name="Ciecko A."/>
            <person name="Parksey D.S."/>
            <person name="Blair E."/>
            <person name="Cittone H."/>
            <person name="Clark E.B."/>
            <person name="Cotton M.D."/>
            <person name="Utterback T.R."/>
            <person name="Khouri H.M."/>
            <person name="Qin H."/>
            <person name="Vamathevan J.J."/>
            <person name="Gill J."/>
            <person name="Scarlato V."/>
            <person name="Masignani V."/>
            <person name="Pizza M."/>
            <person name="Grandi G."/>
            <person name="Sun L."/>
            <person name="Smith H.O."/>
            <person name="Fraser C.M."/>
            <person name="Moxon E.R."/>
            <person name="Rappuoli R."/>
            <person name="Venter J.C."/>
        </authorList>
    </citation>
    <scope>NUCLEOTIDE SEQUENCE [LARGE SCALE GENOMIC DNA]</scope>
    <source>
        <strain>ATCC BAA-335 / MC58</strain>
    </source>
</reference>
<reference key="2">
    <citation type="journal article" date="2005" name="Hum. Vaccin.">
        <title>Characterization of the protein content of a meningococcal outer membrane vesicle vaccine by polyacrylamide gel electrophoresis and mass spectrometry.</title>
        <authorList>
            <person name="Vipond C."/>
            <person name="Wheeler J.X."/>
            <person name="Jones C."/>
            <person name="Feavers I.M."/>
            <person name="Suker J."/>
        </authorList>
    </citation>
    <scope>IDENTIFICATION BY MASS SPECTROMETRY [LARGE SCALE ANALYSIS]</scope>
</reference>
<reference key="3">
    <citation type="journal article" date="2006" name="Proteomics">
        <title>Proteomic analysis of a meningococcal outer membrane vesicle vaccine prepared from the group B strain NZ98/254.</title>
        <authorList>
            <person name="Vipond C."/>
            <person name="Suker J."/>
            <person name="Jones C."/>
            <person name="Tang C."/>
            <person name="Feavers I.M."/>
            <person name="Wheeler J.X."/>
        </authorList>
    </citation>
    <scope>IDENTIFICATION BY MASS SPECTROMETRY [LARGE SCALE ANALYSIS]</scope>
    <source>
        <strain>NZ98/254 / Serogroup B</strain>
    </source>
</reference>